<sequence>MKIVFMGTPDIAVPCLQKIIDENYEILGVVTQPDKPKGRGKKLGMSPVKELAIENNIPVYQPVKARDKEFIDKIKSLNPDVIVVVAFGQILPKEILEIPKLGCINVHVSLLPKYRGAAPINWVIINGEEKTGVTTMYMDEGLDTGDMILKTEVNLDENITAGELHDKMMNIGAETLKETLRLIEEGNAPREVQNHEEFSYAPIMNKSLGNIDFSKSAREIHNLVRGVNPWPSAYTTYNDVIMKVWKTKVLDEKSTKDVGTIIDVSKDGIKVSTIDNVLLIEEIQMPNKKRMLVGEYIKGNTIETGLVLG</sequence>
<reference key="1">
    <citation type="journal article" date="2006" name="Nat. Genet.">
        <title>The multidrug-resistant human pathogen Clostridium difficile has a highly mobile, mosaic genome.</title>
        <authorList>
            <person name="Sebaihia M."/>
            <person name="Wren B.W."/>
            <person name="Mullany P."/>
            <person name="Fairweather N.F."/>
            <person name="Minton N."/>
            <person name="Stabler R."/>
            <person name="Thomson N.R."/>
            <person name="Roberts A.P."/>
            <person name="Cerdeno-Tarraga A.M."/>
            <person name="Wang H."/>
            <person name="Holden M.T.G."/>
            <person name="Wright A."/>
            <person name="Churcher C."/>
            <person name="Quail M.A."/>
            <person name="Baker S."/>
            <person name="Bason N."/>
            <person name="Brooks K."/>
            <person name="Chillingworth T."/>
            <person name="Cronin A."/>
            <person name="Davis P."/>
            <person name="Dowd L."/>
            <person name="Fraser A."/>
            <person name="Feltwell T."/>
            <person name="Hance Z."/>
            <person name="Holroyd S."/>
            <person name="Jagels K."/>
            <person name="Moule S."/>
            <person name="Mungall K."/>
            <person name="Price C."/>
            <person name="Rabbinowitsch E."/>
            <person name="Sharp S."/>
            <person name="Simmonds M."/>
            <person name="Stevens K."/>
            <person name="Unwin L."/>
            <person name="Whithead S."/>
            <person name="Dupuy B."/>
            <person name="Dougan G."/>
            <person name="Barrell B."/>
            <person name="Parkhill J."/>
        </authorList>
    </citation>
    <scope>NUCLEOTIDE SEQUENCE [LARGE SCALE GENOMIC DNA]</scope>
    <source>
        <strain>630</strain>
    </source>
</reference>
<proteinExistence type="inferred from homology"/>
<dbReference type="EC" id="2.1.2.9" evidence="1"/>
<dbReference type="EMBL" id="AM180355">
    <property type="protein sequence ID" value="CAJ69473.1"/>
    <property type="molecule type" value="Genomic_DNA"/>
</dbReference>
<dbReference type="RefSeq" id="WP_011861609.1">
    <property type="nucleotide sequence ID" value="NZ_JAUPES010000012.1"/>
</dbReference>
<dbReference type="RefSeq" id="YP_001089100.1">
    <property type="nucleotide sequence ID" value="NC_009089.1"/>
</dbReference>
<dbReference type="SMR" id="Q182S2"/>
<dbReference type="STRING" id="272563.CD630_25840"/>
<dbReference type="EnsemblBacteria" id="CAJ69473">
    <property type="protein sequence ID" value="CAJ69473"/>
    <property type="gene ID" value="CD630_25840"/>
</dbReference>
<dbReference type="KEGG" id="cdf:CD630_25840"/>
<dbReference type="KEGG" id="pdc:CDIF630_02837"/>
<dbReference type="PATRIC" id="fig|272563.120.peg.2725"/>
<dbReference type="eggNOG" id="COG0223">
    <property type="taxonomic scope" value="Bacteria"/>
</dbReference>
<dbReference type="OrthoDB" id="9802815at2"/>
<dbReference type="PhylomeDB" id="Q182S2"/>
<dbReference type="BioCyc" id="PDIF272563:G12WB-2740-MONOMER"/>
<dbReference type="Proteomes" id="UP000001978">
    <property type="component" value="Chromosome"/>
</dbReference>
<dbReference type="GO" id="GO:0005829">
    <property type="term" value="C:cytosol"/>
    <property type="evidence" value="ECO:0007669"/>
    <property type="project" value="TreeGrafter"/>
</dbReference>
<dbReference type="GO" id="GO:0004479">
    <property type="term" value="F:methionyl-tRNA formyltransferase activity"/>
    <property type="evidence" value="ECO:0007669"/>
    <property type="project" value="UniProtKB-UniRule"/>
</dbReference>
<dbReference type="CDD" id="cd08646">
    <property type="entry name" value="FMT_core_Met-tRNA-FMT_N"/>
    <property type="match status" value="1"/>
</dbReference>
<dbReference type="CDD" id="cd08704">
    <property type="entry name" value="Met_tRNA_FMT_C"/>
    <property type="match status" value="1"/>
</dbReference>
<dbReference type="FunFam" id="3.40.50.12230:FF:000001">
    <property type="entry name" value="Methionyl-tRNA formyltransferase"/>
    <property type="match status" value="1"/>
</dbReference>
<dbReference type="Gene3D" id="3.40.50.12230">
    <property type="match status" value="1"/>
</dbReference>
<dbReference type="HAMAP" id="MF_00182">
    <property type="entry name" value="Formyl_trans"/>
    <property type="match status" value="1"/>
</dbReference>
<dbReference type="InterPro" id="IPR005794">
    <property type="entry name" value="Fmt"/>
</dbReference>
<dbReference type="InterPro" id="IPR005793">
    <property type="entry name" value="Formyl_trans_C"/>
</dbReference>
<dbReference type="InterPro" id="IPR002376">
    <property type="entry name" value="Formyl_transf_N"/>
</dbReference>
<dbReference type="InterPro" id="IPR036477">
    <property type="entry name" value="Formyl_transf_N_sf"/>
</dbReference>
<dbReference type="InterPro" id="IPR011034">
    <property type="entry name" value="Formyl_transferase-like_C_sf"/>
</dbReference>
<dbReference type="InterPro" id="IPR001555">
    <property type="entry name" value="GART_AS"/>
</dbReference>
<dbReference type="InterPro" id="IPR044135">
    <property type="entry name" value="Met-tRNA-FMT_C"/>
</dbReference>
<dbReference type="InterPro" id="IPR041711">
    <property type="entry name" value="Met-tRNA-FMT_N"/>
</dbReference>
<dbReference type="NCBIfam" id="TIGR00460">
    <property type="entry name" value="fmt"/>
    <property type="match status" value="1"/>
</dbReference>
<dbReference type="PANTHER" id="PTHR11138">
    <property type="entry name" value="METHIONYL-TRNA FORMYLTRANSFERASE"/>
    <property type="match status" value="1"/>
</dbReference>
<dbReference type="PANTHER" id="PTHR11138:SF5">
    <property type="entry name" value="METHIONYL-TRNA FORMYLTRANSFERASE, MITOCHONDRIAL"/>
    <property type="match status" value="1"/>
</dbReference>
<dbReference type="Pfam" id="PF02911">
    <property type="entry name" value="Formyl_trans_C"/>
    <property type="match status" value="1"/>
</dbReference>
<dbReference type="Pfam" id="PF00551">
    <property type="entry name" value="Formyl_trans_N"/>
    <property type="match status" value="1"/>
</dbReference>
<dbReference type="SUPFAM" id="SSF50486">
    <property type="entry name" value="FMT C-terminal domain-like"/>
    <property type="match status" value="1"/>
</dbReference>
<dbReference type="SUPFAM" id="SSF53328">
    <property type="entry name" value="Formyltransferase"/>
    <property type="match status" value="1"/>
</dbReference>
<dbReference type="PROSITE" id="PS00373">
    <property type="entry name" value="GART"/>
    <property type="match status" value="1"/>
</dbReference>
<evidence type="ECO:0000255" key="1">
    <source>
        <dbReference type="HAMAP-Rule" id="MF_00182"/>
    </source>
</evidence>
<feature type="chain" id="PRO_1000020047" description="Methionyl-tRNA formyltransferase">
    <location>
        <begin position="1"/>
        <end position="309"/>
    </location>
</feature>
<feature type="binding site" evidence="1">
    <location>
        <begin position="109"/>
        <end position="112"/>
    </location>
    <ligand>
        <name>(6S)-5,6,7,8-tetrahydrofolate</name>
        <dbReference type="ChEBI" id="CHEBI:57453"/>
    </ligand>
</feature>
<comment type="function">
    <text evidence="1">Attaches a formyl group to the free amino group of methionyl-tRNA(fMet). The formyl group appears to play a dual role in the initiator identity of N-formylmethionyl-tRNA by promoting its recognition by IF2 and preventing the misappropriation of this tRNA by the elongation apparatus.</text>
</comment>
<comment type="catalytic activity">
    <reaction evidence="1">
        <text>L-methionyl-tRNA(fMet) + (6R)-10-formyltetrahydrofolate = N-formyl-L-methionyl-tRNA(fMet) + (6S)-5,6,7,8-tetrahydrofolate + H(+)</text>
        <dbReference type="Rhea" id="RHEA:24380"/>
        <dbReference type="Rhea" id="RHEA-COMP:9952"/>
        <dbReference type="Rhea" id="RHEA-COMP:9953"/>
        <dbReference type="ChEBI" id="CHEBI:15378"/>
        <dbReference type="ChEBI" id="CHEBI:57453"/>
        <dbReference type="ChEBI" id="CHEBI:78530"/>
        <dbReference type="ChEBI" id="CHEBI:78844"/>
        <dbReference type="ChEBI" id="CHEBI:195366"/>
        <dbReference type="EC" id="2.1.2.9"/>
    </reaction>
</comment>
<comment type="similarity">
    <text evidence="1">Belongs to the Fmt family.</text>
</comment>
<keyword id="KW-0648">Protein biosynthesis</keyword>
<keyword id="KW-1185">Reference proteome</keyword>
<keyword id="KW-0808">Transferase</keyword>
<gene>
    <name evidence="1" type="primary">fmt</name>
    <name type="ordered locus">CD630_25840</name>
</gene>
<organism>
    <name type="scientific">Clostridioides difficile (strain 630)</name>
    <name type="common">Peptoclostridium difficile</name>
    <dbReference type="NCBI Taxonomy" id="272563"/>
    <lineage>
        <taxon>Bacteria</taxon>
        <taxon>Bacillati</taxon>
        <taxon>Bacillota</taxon>
        <taxon>Clostridia</taxon>
        <taxon>Peptostreptococcales</taxon>
        <taxon>Peptostreptococcaceae</taxon>
        <taxon>Clostridioides</taxon>
    </lineage>
</organism>
<accession>Q182S2</accession>
<protein>
    <recommendedName>
        <fullName evidence="1">Methionyl-tRNA formyltransferase</fullName>
        <ecNumber evidence="1">2.1.2.9</ecNumber>
    </recommendedName>
</protein>
<name>FMT_CLOD6</name>